<name>MTNC_SHEDO</name>
<gene>
    <name evidence="1" type="primary">mtnC</name>
    <name type="ordered locus">Sden_0077</name>
</gene>
<evidence type="ECO:0000255" key="1">
    <source>
        <dbReference type="HAMAP-Rule" id="MF_01681"/>
    </source>
</evidence>
<dbReference type="EC" id="3.1.3.77" evidence="1"/>
<dbReference type="EMBL" id="CP000302">
    <property type="protein sequence ID" value="ABE53374.1"/>
    <property type="molecule type" value="Genomic_DNA"/>
</dbReference>
<dbReference type="RefSeq" id="WP_011494543.1">
    <property type="nucleotide sequence ID" value="NC_007954.1"/>
</dbReference>
<dbReference type="SMR" id="Q12T52"/>
<dbReference type="STRING" id="318161.Sden_0077"/>
<dbReference type="KEGG" id="sdn:Sden_0077"/>
<dbReference type="eggNOG" id="COG4229">
    <property type="taxonomic scope" value="Bacteria"/>
</dbReference>
<dbReference type="HOGENOM" id="CLU_023273_0_0_6"/>
<dbReference type="OrthoDB" id="9797416at2"/>
<dbReference type="UniPathway" id="UPA00904">
    <property type="reaction ID" value="UER00876"/>
</dbReference>
<dbReference type="UniPathway" id="UPA00904">
    <property type="reaction ID" value="UER00877"/>
</dbReference>
<dbReference type="Proteomes" id="UP000001982">
    <property type="component" value="Chromosome"/>
</dbReference>
<dbReference type="GO" id="GO:0043715">
    <property type="term" value="F:2,3-diketo-5-methylthiopentyl-1-phosphate enolase activity"/>
    <property type="evidence" value="ECO:0007669"/>
    <property type="project" value="UniProtKB-UniRule"/>
</dbReference>
<dbReference type="GO" id="GO:0043716">
    <property type="term" value="F:2-hydroxy-3-keto-5-methylthiopentenyl-1-phosphate phosphatase activity"/>
    <property type="evidence" value="ECO:0007669"/>
    <property type="project" value="UniProtKB-UniRule"/>
</dbReference>
<dbReference type="GO" id="GO:0043874">
    <property type="term" value="F:acireductone synthase activity"/>
    <property type="evidence" value="ECO:0007669"/>
    <property type="project" value="UniProtKB-EC"/>
</dbReference>
<dbReference type="GO" id="GO:0000287">
    <property type="term" value="F:magnesium ion binding"/>
    <property type="evidence" value="ECO:0007669"/>
    <property type="project" value="UniProtKB-UniRule"/>
</dbReference>
<dbReference type="GO" id="GO:0019509">
    <property type="term" value="P:L-methionine salvage from methylthioadenosine"/>
    <property type="evidence" value="ECO:0007669"/>
    <property type="project" value="UniProtKB-UniRule"/>
</dbReference>
<dbReference type="CDD" id="cd01629">
    <property type="entry name" value="HAD_EP"/>
    <property type="match status" value="1"/>
</dbReference>
<dbReference type="Gene3D" id="1.10.720.60">
    <property type="match status" value="1"/>
</dbReference>
<dbReference type="Gene3D" id="3.40.50.1000">
    <property type="entry name" value="HAD superfamily/HAD-like"/>
    <property type="match status" value="1"/>
</dbReference>
<dbReference type="HAMAP" id="MF_01681">
    <property type="entry name" value="Salvage_MtnC"/>
    <property type="match status" value="1"/>
</dbReference>
<dbReference type="InterPro" id="IPR023943">
    <property type="entry name" value="Enolase-ppase_E1"/>
</dbReference>
<dbReference type="InterPro" id="IPR036412">
    <property type="entry name" value="HAD-like_sf"/>
</dbReference>
<dbReference type="InterPro" id="IPR006439">
    <property type="entry name" value="HAD-SF_hydro_IA"/>
</dbReference>
<dbReference type="InterPro" id="IPR023214">
    <property type="entry name" value="HAD_sf"/>
</dbReference>
<dbReference type="NCBIfam" id="TIGR01691">
    <property type="entry name" value="enolase-ppase"/>
    <property type="match status" value="1"/>
</dbReference>
<dbReference type="NCBIfam" id="TIGR01549">
    <property type="entry name" value="HAD-SF-IA-v1"/>
    <property type="match status" value="1"/>
</dbReference>
<dbReference type="PANTHER" id="PTHR20371">
    <property type="entry name" value="ENOLASE-PHOSPHATASE E1"/>
    <property type="match status" value="1"/>
</dbReference>
<dbReference type="PANTHER" id="PTHR20371:SF1">
    <property type="entry name" value="ENOLASE-PHOSPHATASE E1"/>
    <property type="match status" value="1"/>
</dbReference>
<dbReference type="Pfam" id="PF00702">
    <property type="entry name" value="Hydrolase"/>
    <property type="match status" value="1"/>
</dbReference>
<dbReference type="PRINTS" id="PR00413">
    <property type="entry name" value="HADHALOGNASE"/>
</dbReference>
<dbReference type="SFLD" id="SFLDG01133">
    <property type="entry name" value="C1.5.4:_Enolase-phosphatase_Li"/>
    <property type="match status" value="1"/>
</dbReference>
<dbReference type="SFLD" id="SFLDF00044">
    <property type="entry name" value="enolase-phosphatase"/>
    <property type="match status" value="1"/>
</dbReference>
<dbReference type="SUPFAM" id="SSF56784">
    <property type="entry name" value="HAD-like"/>
    <property type="match status" value="1"/>
</dbReference>
<feature type="chain" id="PRO_0000357400" description="Enolase-phosphatase E1">
    <location>
        <begin position="1"/>
        <end position="225"/>
    </location>
</feature>
<keyword id="KW-0028">Amino-acid biosynthesis</keyword>
<keyword id="KW-0378">Hydrolase</keyword>
<keyword id="KW-0460">Magnesium</keyword>
<keyword id="KW-0479">Metal-binding</keyword>
<keyword id="KW-0486">Methionine biosynthesis</keyword>
<keyword id="KW-1185">Reference proteome</keyword>
<sequence length="225" mass="24912">MSIKAIVVDTAGTTTDLNFIQDVLFPYSHQVMASFLAQNQQQVLVESCINDVRDIALEPSATVARVAEILQIWITEDRKLAPLKTLQGLIWKQGYSSLAFQGQIYPDFIEAISRYRQQGVAIYSFSSGSVEAQKLLFSHSEVGDLTPMFSGHFDMRMGNKLDKQAYLNIHNTLGLPPKQILFVSDTQEELTAAQAAGMMTCLMSRGDAFAPTEHKQVGSFTALNI</sequence>
<proteinExistence type="inferred from homology"/>
<organism>
    <name type="scientific">Shewanella denitrificans (strain OS217 / ATCC BAA-1090 / DSM 15013)</name>
    <dbReference type="NCBI Taxonomy" id="318161"/>
    <lineage>
        <taxon>Bacteria</taxon>
        <taxon>Pseudomonadati</taxon>
        <taxon>Pseudomonadota</taxon>
        <taxon>Gammaproteobacteria</taxon>
        <taxon>Alteromonadales</taxon>
        <taxon>Shewanellaceae</taxon>
        <taxon>Shewanella</taxon>
    </lineage>
</organism>
<protein>
    <recommendedName>
        <fullName evidence="1">Enolase-phosphatase E1</fullName>
        <ecNumber evidence="1">3.1.3.77</ecNumber>
    </recommendedName>
    <alternativeName>
        <fullName evidence="1">2,3-diketo-5-methylthio-1-phosphopentane phosphatase</fullName>
    </alternativeName>
</protein>
<reference key="1">
    <citation type="submission" date="2006-03" db="EMBL/GenBank/DDBJ databases">
        <title>Complete sequence of Shewanella denitrificans OS217.</title>
        <authorList>
            <consortium name="US DOE Joint Genome Institute"/>
            <person name="Copeland A."/>
            <person name="Lucas S."/>
            <person name="Lapidus A."/>
            <person name="Barry K."/>
            <person name="Detter J.C."/>
            <person name="Glavina del Rio T."/>
            <person name="Hammon N."/>
            <person name="Israni S."/>
            <person name="Dalin E."/>
            <person name="Tice H."/>
            <person name="Pitluck S."/>
            <person name="Brettin T."/>
            <person name="Bruce D."/>
            <person name="Han C."/>
            <person name="Tapia R."/>
            <person name="Gilna P."/>
            <person name="Kiss H."/>
            <person name="Schmutz J."/>
            <person name="Larimer F."/>
            <person name="Land M."/>
            <person name="Hauser L."/>
            <person name="Kyrpides N."/>
            <person name="Lykidis A."/>
            <person name="Richardson P."/>
        </authorList>
    </citation>
    <scope>NUCLEOTIDE SEQUENCE [LARGE SCALE GENOMIC DNA]</scope>
    <source>
        <strain>OS217 / ATCC BAA-1090 / DSM 15013</strain>
    </source>
</reference>
<accession>Q12T52</accession>
<comment type="function">
    <text evidence="1">Bifunctional enzyme that catalyzes the enolization of 2,3-diketo-5-methylthiopentyl-1-phosphate (DK-MTP-1-P) into the intermediate 2-hydroxy-3-keto-5-methylthiopentenyl-1-phosphate (HK-MTPenyl-1-P), which is then dephosphorylated to form the acireductone 1,2-dihydroxy-3-keto-5-methylthiopentene (DHK-MTPene).</text>
</comment>
<comment type="catalytic activity">
    <reaction evidence="1">
        <text>5-methylsulfanyl-2,3-dioxopentyl phosphate + H2O = 1,2-dihydroxy-5-(methylsulfanyl)pent-1-en-3-one + phosphate</text>
        <dbReference type="Rhea" id="RHEA:21700"/>
        <dbReference type="ChEBI" id="CHEBI:15377"/>
        <dbReference type="ChEBI" id="CHEBI:43474"/>
        <dbReference type="ChEBI" id="CHEBI:49252"/>
        <dbReference type="ChEBI" id="CHEBI:58828"/>
        <dbReference type="EC" id="3.1.3.77"/>
    </reaction>
</comment>
<comment type="cofactor">
    <cofactor evidence="1">
        <name>Mg(2+)</name>
        <dbReference type="ChEBI" id="CHEBI:18420"/>
    </cofactor>
    <text evidence="1">Binds 1 Mg(2+) ion per subunit.</text>
</comment>
<comment type="pathway">
    <text evidence="1">Amino-acid biosynthesis; L-methionine biosynthesis via salvage pathway; L-methionine from S-methyl-5-thio-alpha-D-ribose 1-phosphate: step 3/6.</text>
</comment>
<comment type="pathway">
    <text evidence="1">Amino-acid biosynthesis; L-methionine biosynthesis via salvage pathway; L-methionine from S-methyl-5-thio-alpha-D-ribose 1-phosphate: step 4/6.</text>
</comment>
<comment type="subunit">
    <text evidence="1">Monomer.</text>
</comment>
<comment type="similarity">
    <text evidence="1">Belongs to the HAD-like hydrolase superfamily. MasA/MtnC family.</text>
</comment>